<evidence type="ECO:0000250" key="1"/>
<evidence type="ECO:0000305" key="2"/>
<accession>P0C1P8</accession>
<accession>O34092</accession>
<accession>Q9RL91</accession>
<feature type="chain" id="PRO_0000120451" description="Glutamate-1-semialdehyde 2,1-aminomutase 1">
    <location>
        <begin position="1"/>
        <end position="428"/>
    </location>
</feature>
<feature type="modified residue" description="N6-(pyridoxal phosphate)lysine" evidence="1">
    <location>
        <position position="267"/>
    </location>
</feature>
<keyword id="KW-0963">Cytoplasm</keyword>
<keyword id="KW-0413">Isomerase</keyword>
<keyword id="KW-0627">Porphyrin biosynthesis</keyword>
<keyword id="KW-0663">Pyridoxal phosphate</keyword>
<reference key="1">
    <citation type="journal article" date="1999" name="Microb. Drug Resist.">
        <title>Antibiotic resistance as a stress response: complete sequencing of a large number of chromosomal loci in Staphylococcus aureus strain COL that impact on the expression of resistance to methicillin.</title>
        <authorList>
            <person name="de Lencastre H."/>
            <person name="Wu S.-W."/>
            <person name="Pinho M.G."/>
            <person name="Ludovice A.M."/>
            <person name="Filipe S."/>
            <person name="Gardete S."/>
            <person name="Sobral R."/>
            <person name="Gill S.R."/>
            <person name="Chung M."/>
            <person name="Tomasz A."/>
        </authorList>
    </citation>
    <scope>NUCLEOTIDE SEQUENCE [GENOMIC DNA]</scope>
    <source>
        <strain>RUSA233</strain>
    </source>
</reference>
<gene>
    <name type="primary">hemL1</name>
    <name type="synonym">hemL</name>
</gene>
<organism>
    <name type="scientific">Staphylococcus aureus</name>
    <dbReference type="NCBI Taxonomy" id="1280"/>
    <lineage>
        <taxon>Bacteria</taxon>
        <taxon>Bacillati</taxon>
        <taxon>Bacillota</taxon>
        <taxon>Bacilli</taxon>
        <taxon>Bacillales</taxon>
        <taxon>Staphylococcaceae</taxon>
        <taxon>Staphylococcus</taxon>
    </lineage>
</organism>
<proteinExistence type="inferred from homology"/>
<sequence length="428" mass="46388">MRYTKSEEAMKVAETLMPGGVNSPVRAFKSVDTPAIFMDHGKGSKIYDIDGNEYIDYVLSWGPLILGHRDPQVISHLHEAIDKGTSFGASTLLENKLAQLVIDRVPSIEKVRMVSSGTEATLDTLRLARGYTGRNKIVKFEGCYHGHSDSLLIKAGSGVATLGLPDSPGVPEGIAKNTITVPYNDLDALKIAFEKFGNDIAGVIVEPVAGNMGVVPPIEGFLQGLRDITTEYGALLIFDEVMTGFRVGYHCAQGYFGVTPDLTCLGKVIGGGLPVGAFGGKKEIMDHIAPLGNIYQAGTLSGNPLAMTSGYETLSQLTPETYEYFNMLGDILEDGLKRVFAKHNVPITVNRAGSMIGYFLNEGPVTNFEQANKSDLKLFAEMYREMAKEGVFLPPSQFEGTFLSTAHTKEDIEKTIQAFDTALSRIVK</sequence>
<name>GSA1_STAAU</name>
<dbReference type="EC" id="5.4.3.8"/>
<dbReference type="EMBL" id="Y18635">
    <property type="protein sequence ID" value="CAB60738.1"/>
    <property type="molecule type" value="Genomic_DNA"/>
</dbReference>
<dbReference type="RefSeq" id="WP_001270868.1">
    <property type="nucleotide sequence ID" value="NZ_WWFR01000004.1"/>
</dbReference>
<dbReference type="SMR" id="P0C1P8"/>
<dbReference type="OMA" id="WGPLIFG"/>
<dbReference type="UniPathway" id="UPA00251">
    <property type="reaction ID" value="UER00317"/>
</dbReference>
<dbReference type="GO" id="GO:0005737">
    <property type="term" value="C:cytoplasm"/>
    <property type="evidence" value="ECO:0007669"/>
    <property type="project" value="UniProtKB-SubCell"/>
</dbReference>
<dbReference type="GO" id="GO:0042286">
    <property type="term" value="F:glutamate-1-semialdehyde 2,1-aminomutase activity"/>
    <property type="evidence" value="ECO:0007669"/>
    <property type="project" value="UniProtKB-UniRule"/>
</dbReference>
<dbReference type="GO" id="GO:0030170">
    <property type="term" value="F:pyridoxal phosphate binding"/>
    <property type="evidence" value="ECO:0007669"/>
    <property type="project" value="InterPro"/>
</dbReference>
<dbReference type="GO" id="GO:0008483">
    <property type="term" value="F:transaminase activity"/>
    <property type="evidence" value="ECO:0007669"/>
    <property type="project" value="InterPro"/>
</dbReference>
<dbReference type="GO" id="GO:0006782">
    <property type="term" value="P:protoporphyrinogen IX biosynthetic process"/>
    <property type="evidence" value="ECO:0007669"/>
    <property type="project" value="UniProtKB-UniRule"/>
</dbReference>
<dbReference type="CDD" id="cd00610">
    <property type="entry name" value="OAT_like"/>
    <property type="match status" value="1"/>
</dbReference>
<dbReference type="FunFam" id="3.40.640.10:FF:000021">
    <property type="entry name" value="Glutamate-1-semialdehyde 2,1-aminomutase"/>
    <property type="match status" value="1"/>
</dbReference>
<dbReference type="Gene3D" id="3.90.1150.10">
    <property type="entry name" value="Aspartate Aminotransferase, domain 1"/>
    <property type="match status" value="1"/>
</dbReference>
<dbReference type="Gene3D" id="3.40.640.10">
    <property type="entry name" value="Type I PLP-dependent aspartate aminotransferase-like (Major domain)"/>
    <property type="match status" value="1"/>
</dbReference>
<dbReference type="HAMAP" id="MF_00375">
    <property type="entry name" value="HemL_aminotrans_3"/>
    <property type="match status" value="1"/>
</dbReference>
<dbReference type="InterPro" id="IPR004639">
    <property type="entry name" value="4pyrrol_synth_GluAld_NH2Trfase"/>
</dbReference>
<dbReference type="InterPro" id="IPR005814">
    <property type="entry name" value="Aminotrans_3"/>
</dbReference>
<dbReference type="InterPro" id="IPR049704">
    <property type="entry name" value="Aminotrans_3_PPA_site"/>
</dbReference>
<dbReference type="InterPro" id="IPR015424">
    <property type="entry name" value="PyrdxlP-dep_Trfase"/>
</dbReference>
<dbReference type="InterPro" id="IPR015421">
    <property type="entry name" value="PyrdxlP-dep_Trfase_major"/>
</dbReference>
<dbReference type="InterPro" id="IPR015422">
    <property type="entry name" value="PyrdxlP-dep_Trfase_small"/>
</dbReference>
<dbReference type="NCBIfam" id="TIGR00713">
    <property type="entry name" value="hemL"/>
    <property type="match status" value="1"/>
</dbReference>
<dbReference type="NCBIfam" id="NF000818">
    <property type="entry name" value="PRK00062.1"/>
    <property type="match status" value="1"/>
</dbReference>
<dbReference type="PANTHER" id="PTHR43713">
    <property type="entry name" value="GLUTAMATE-1-SEMIALDEHYDE 2,1-AMINOMUTASE"/>
    <property type="match status" value="1"/>
</dbReference>
<dbReference type="PANTHER" id="PTHR43713:SF3">
    <property type="entry name" value="GLUTAMATE-1-SEMIALDEHYDE 2,1-AMINOMUTASE 1, CHLOROPLASTIC-RELATED"/>
    <property type="match status" value="1"/>
</dbReference>
<dbReference type="Pfam" id="PF00202">
    <property type="entry name" value="Aminotran_3"/>
    <property type="match status" value="1"/>
</dbReference>
<dbReference type="SUPFAM" id="SSF53383">
    <property type="entry name" value="PLP-dependent transferases"/>
    <property type="match status" value="1"/>
</dbReference>
<dbReference type="PROSITE" id="PS00600">
    <property type="entry name" value="AA_TRANSFER_CLASS_3"/>
    <property type="match status" value="1"/>
</dbReference>
<comment type="catalytic activity">
    <reaction>
        <text>(S)-4-amino-5-oxopentanoate = 5-aminolevulinate</text>
        <dbReference type="Rhea" id="RHEA:14265"/>
        <dbReference type="ChEBI" id="CHEBI:57501"/>
        <dbReference type="ChEBI" id="CHEBI:356416"/>
        <dbReference type="EC" id="5.4.3.8"/>
    </reaction>
</comment>
<comment type="cofactor">
    <cofactor evidence="1">
        <name>pyridoxal 5'-phosphate</name>
        <dbReference type="ChEBI" id="CHEBI:597326"/>
    </cofactor>
</comment>
<comment type="pathway">
    <text>Porphyrin-containing compound metabolism; protoporphyrin-IX biosynthesis; 5-aminolevulinate from L-glutamyl-tRNA(Glu): step 2/2.</text>
</comment>
<comment type="subunit">
    <text evidence="1">Homodimer.</text>
</comment>
<comment type="subcellular location">
    <subcellularLocation>
        <location evidence="2">Cytoplasm</location>
    </subcellularLocation>
</comment>
<comment type="similarity">
    <text evidence="2">Belongs to the class-III pyridoxal-phosphate-dependent aminotransferase family. HemL subfamily.</text>
</comment>
<protein>
    <recommendedName>
        <fullName>Glutamate-1-semialdehyde 2,1-aminomutase 1</fullName>
        <shortName>GSA 1</shortName>
        <ecNumber>5.4.3.8</ecNumber>
    </recommendedName>
    <alternativeName>
        <fullName>Glutamate-1-semialdehyde aminotransferase 1</fullName>
        <shortName>GSA-AT 1</shortName>
    </alternativeName>
</protein>